<evidence type="ECO:0000255" key="1">
    <source>
        <dbReference type="HAMAP-Rule" id="MF_00731"/>
    </source>
</evidence>
<feature type="chain" id="PRO_0000193157" description="2-succinylbenzoate--CoA ligase">
    <location>
        <begin position="1"/>
        <end position="482"/>
    </location>
</feature>
<keyword id="KW-0067">ATP-binding</keyword>
<keyword id="KW-0436">Ligase</keyword>
<keyword id="KW-0474">Menaquinone biosynthesis</keyword>
<keyword id="KW-0547">Nucleotide-binding</keyword>
<reference key="1">
    <citation type="journal article" date="2006" name="J. Bacteriol.">
        <title>Pathogenomic sequence analysis of Bacillus cereus and Bacillus thuringiensis isolates closely related to Bacillus anthracis.</title>
        <authorList>
            <person name="Han C.S."/>
            <person name="Xie G."/>
            <person name="Challacombe J.F."/>
            <person name="Altherr M.R."/>
            <person name="Bhotika S.S."/>
            <person name="Bruce D."/>
            <person name="Campbell C.S."/>
            <person name="Campbell M.L."/>
            <person name="Chen J."/>
            <person name="Chertkov O."/>
            <person name="Cleland C."/>
            <person name="Dimitrijevic M."/>
            <person name="Doggett N.A."/>
            <person name="Fawcett J.J."/>
            <person name="Glavina T."/>
            <person name="Goodwin L.A."/>
            <person name="Hill K.K."/>
            <person name="Hitchcock P."/>
            <person name="Jackson P.J."/>
            <person name="Keim P."/>
            <person name="Kewalramani A.R."/>
            <person name="Longmire J."/>
            <person name="Lucas S."/>
            <person name="Malfatti S."/>
            <person name="McMurry K."/>
            <person name="Meincke L.J."/>
            <person name="Misra M."/>
            <person name="Moseman B.L."/>
            <person name="Mundt M."/>
            <person name="Munk A.C."/>
            <person name="Okinaka R.T."/>
            <person name="Parson-Quintana B."/>
            <person name="Reilly L.P."/>
            <person name="Richardson P."/>
            <person name="Robinson D.L."/>
            <person name="Rubin E."/>
            <person name="Saunders E."/>
            <person name="Tapia R."/>
            <person name="Tesmer J.G."/>
            <person name="Thayer N."/>
            <person name="Thompson L.S."/>
            <person name="Tice H."/>
            <person name="Ticknor L.O."/>
            <person name="Wills P.L."/>
            <person name="Brettin T.S."/>
            <person name="Gilna P."/>
        </authorList>
    </citation>
    <scope>NUCLEOTIDE SEQUENCE [LARGE SCALE GENOMIC DNA]</scope>
    <source>
        <strain>ZK / E33L</strain>
    </source>
</reference>
<proteinExistence type="inferred from homology"/>
<protein>
    <recommendedName>
        <fullName evidence="1">2-succinylbenzoate--CoA ligase</fullName>
        <ecNumber evidence="1">6.2.1.26</ecNumber>
    </recommendedName>
    <alternativeName>
        <fullName evidence="1">o-succinylbenzoyl-CoA synthetase</fullName>
        <shortName evidence="1">OSB-CoA synthetase</shortName>
    </alternativeName>
</protein>
<comment type="function">
    <text evidence="1">Converts 2-succinylbenzoate (OSB) to 2-succinylbenzoyl-CoA (OSB-CoA).</text>
</comment>
<comment type="catalytic activity">
    <reaction evidence="1">
        <text>2-succinylbenzoate + ATP + CoA = 2-succinylbenzoyl-CoA + AMP + diphosphate</text>
        <dbReference type="Rhea" id="RHEA:17009"/>
        <dbReference type="ChEBI" id="CHEBI:18325"/>
        <dbReference type="ChEBI" id="CHEBI:30616"/>
        <dbReference type="ChEBI" id="CHEBI:33019"/>
        <dbReference type="ChEBI" id="CHEBI:57287"/>
        <dbReference type="ChEBI" id="CHEBI:57364"/>
        <dbReference type="ChEBI" id="CHEBI:456215"/>
        <dbReference type="EC" id="6.2.1.26"/>
    </reaction>
</comment>
<comment type="pathway">
    <text evidence="1">Quinol/quinone metabolism; 1,4-dihydroxy-2-naphthoate biosynthesis; 1,4-dihydroxy-2-naphthoate from chorismate: step 5/7.</text>
</comment>
<comment type="pathway">
    <text evidence="1">Quinol/quinone metabolism; menaquinone biosynthesis.</text>
</comment>
<comment type="similarity">
    <text evidence="1">Belongs to the ATP-dependent AMP-binding enzyme family. MenE subfamily.</text>
</comment>
<dbReference type="EC" id="6.2.1.26" evidence="1"/>
<dbReference type="EMBL" id="CP000001">
    <property type="protein sequence ID" value="AAU15666.1"/>
    <property type="molecule type" value="Genomic_DNA"/>
</dbReference>
<dbReference type="SMR" id="Q632I5"/>
<dbReference type="KEGG" id="bcz:BCE33L4607"/>
<dbReference type="UniPathway" id="UPA00079"/>
<dbReference type="UniPathway" id="UPA01057">
    <property type="reaction ID" value="UER00166"/>
</dbReference>
<dbReference type="Proteomes" id="UP000002612">
    <property type="component" value="Chromosome"/>
</dbReference>
<dbReference type="GO" id="GO:0005524">
    <property type="term" value="F:ATP binding"/>
    <property type="evidence" value="ECO:0007669"/>
    <property type="project" value="UniProtKB-KW"/>
</dbReference>
<dbReference type="GO" id="GO:0008756">
    <property type="term" value="F:o-succinylbenzoate-CoA ligase activity"/>
    <property type="evidence" value="ECO:0007669"/>
    <property type="project" value="UniProtKB-UniRule"/>
</dbReference>
<dbReference type="GO" id="GO:0009234">
    <property type="term" value="P:menaquinone biosynthetic process"/>
    <property type="evidence" value="ECO:0007669"/>
    <property type="project" value="UniProtKB-UniRule"/>
</dbReference>
<dbReference type="CDD" id="cd05912">
    <property type="entry name" value="OSB_CoA_lg"/>
    <property type="match status" value="1"/>
</dbReference>
<dbReference type="FunFam" id="3.30.300.30:FF:000008">
    <property type="entry name" value="2,3-dihydroxybenzoate-AMP ligase"/>
    <property type="match status" value="1"/>
</dbReference>
<dbReference type="Gene3D" id="3.30.300.30">
    <property type="match status" value="1"/>
</dbReference>
<dbReference type="Gene3D" id="3.40.50.12780">
    <property type="entry name" value="N-terminal domain of ligase-like"/>
    <property type="match status" value="1"/>
</dbReference>
<dbReference type="HAMAP" id="MF_00731">
    <property type="entry name" value="MenE"/>
    <property type="match status" value="1"/>
</dbReference>
<dbReference type="InterPro" id="IPR025110">
    <property type="entry name" value="AMP-bd_C"/>
</dbReference>
<dbReference type="InterPro" id="IPR045851">
    <property type="entry name" value="AMP-bd_C_sf"/>
</dbReference>
<dbReference type="InterPro" id="IPR020845">
    <property type="entry name" value="AMP-binding_CS"/>
</dbReference>
<dbReference type="InterPro" id="IPR000873">
    <property type="entry name" value="AMP-dep_synth/lig_dom"/>
</dbReference>
<dbReference type="InterPro" id="IPR042099">
    <property type="entry name" value="ANL_N_sf"/>
</dbReference>
<dbReference type="InterPro" id="IPR010192">
    <property type="entry name" value="MenE"/>
</dbReference>
<dbReference type="NCBIfam" id="TIGR01923">
    <property type="entry name" value="menE"/>
    <property type="match status" value="1"/>
</dbReference>
<dbReference type="NCBIfam" id="NF002966">
    <property type="entry name" value="PRK03640.1"/>
    <property type="match status" value="1"/>
</dbReference>
<dbReference type="PANTHER" id="PTHR24096:SF149">
    <property type="entry name" value="AMP-BINDING DOMAIN-CONTAINING PROTEIN-RELATED"/>
    <property type="match status" value="1"/>
</dbReference>
<dbReference type="PANTHER" id="PTHR24096">
    <property type="entry name" value="LONG-CHAIN-FATTY-ACID--COA LIGASE"/>
    <property type="match status" value="1"/>
</dbReference>
<dbReference type="Pfam" id="PF00501">
    <property type="entry name" value="AMP-binding"/>
    <property type="match status" value="1"/>
</dbReference>
<dbReference type="Pfam" id="PF13193">
    <property type="entry name" value="AMP-binding_C"/>
    <property type="match status" value="1"/>
</dbReference>
<dbReference type="SUPFAM" id="SSF56801">
    <property type="entry name" value="Acetyl-CoA synthetase-like"/>
    <property type="match status" value="1"/>
</dbReference>
<dbReference type="PROSITE" id="PS00455">
    <property type="entry name" value="AMP_BINDING"/>
    <property type="match status" value="1"/>
</dbReference>
<sequence length="482" mass="54034">MMETMPNWLMQRAFLTPDRTAIEMEEEKVTFMQLHEKVVSVCEHLTHVGVKRGQKVAVLMKNGMEMITVIHALSYVGAVAVLLNTRLSREELLWQMDDAEVICLVTDQDFEAKDIPVYSFAEVMNGPKEEASIQEEFSLKEAMTIIYTSGTTGKPKGVILTYGNHWASAVGSSFNLGLRDDDCWLACMPMFHVGGLSLLMKNIMYGMRILLVPKYDADFIHKALQTRGVTIISVVSKMLTDLLERLGEETYPPSLRCMLLGGGPAPKPLLEACVEKRIPVYQTYGMTETSSQICTLSADYMLMKVGSAGKPLFQCQLRIEKDGVVVPPFAEGEIVVKGPNVTGGYFNREDATRETIQNGWLHTGDLGYLDEEGFLYVLDRRSDLIISGGENIYPAQIEEVLLSHPMVAEAGVVGMTDDKWGQVPAAFVVKSGEITEEEILHFCEEKLAKYKVPKKAWFLEELPRNASKKLLRRELRQLVEEM</sequence>
<gene>
    <name evidence="1" type="primary">menE</name>
    <name type="ordered locus">BCE33L4607</name>
</gene>
<accession>Q632I5</accession>
<organism>
    <name type="scientific">Bacillus cereus (strain ZK / E33L)</name>
    <dbReference type="NCBI Taxonomy" id="288681"/>
    <lineage>
        <taxon>Bacteria</taxon>
        <taxon>Bacillati</taxon>
        <taxon>Bacillota</taxon>
        <taxon>Bacilli</taxon>
        <taxon>Bacillales</taxon>
        <taxon>Bacillaceae</taxon>
        <taxon>Bacillus</taxon>
        <taxon>Bacillus cereus group</taxon>
    </lineage>
</organism>
<name>MENE_BACCZ</name>